<name>TRUA_BURTA</name>
<keyword id="KW-0413">Isomerase</keyword>
<keyword id="KW-0819">tRNA processing</keyword>
<protein>
    <recommendedName>
        <fullName evidence="1">tRNA pseudouridine synthase A</fullName>
        <ecNumber evidence="1">5.4.99.12</ecNumber>
    </recommendedName>
    <alternativeName>
        <fullName evidence="1">tRNA pseudouridine(38-40) synthase</fullName>
    </alternativeName>
    <alternativeName>
        <fullName evidence="1">tRNA pseudouridylate synthase I</fullName>
    </alternativeName>
    <alternativeName>
        <fullName evidence="1">tRNA-uridine isomerase I</fullName>
    </alternativeName>
</protein>
<reference key="1">
    <citation type="journal article" date="2005" name="BMC Genomics">
        <title>Bacterial genome adaptation to niches: divergence of the potential virulence genes in three Burkholderia species of different survival strategies.</title>
        <authorList>
            <person name="Kim H.S."/>
            <person name="Schell M.A."/>
            <person name="Yu Y."/>
            <person name="Ulrich R.L."/>
            <person name="Sarria S.H."/>
            <person name="Nierman W.C."/>
            <person name="DeShazer D."/>
        </authorList>
    </citation>
    <scope>NUCLEOTIDE SEQUENCE [LARGE SCALE GENOMIC DNA]</scope>
    <source>
        <strain>ATCC 700388 / DSM 13276 / CCUG 48851 / CIP 106301 / E264</strain>
    </source>
</reference>
<organism>
    <name type="scientific">Burkholderia thailandensis (strain ATCC 700388 / DSM 13276 / CCUG 48851 / CIP 106301 / E264)</name>
    <dbReference type="NCBI Taxonomy" id="271848"/>
    <lineage>
        <taxon>Bacteria</taxon>
        <taxon>Pseudomonadati</taxon>
        <taxon>Pseudomonadota</taxon>
        <taxon>Betaproteobacteria</taxon>
        <taxon>Burkholderiales</taxon>
        <taxon>Burkholderiaceae</taxon>
        <taxon>Burkholderia</taxon>
        <taxon>pseudomallei group</taxon>
    </lineage>
</organism>
<proteinExistence type="inferred from homology"/>
<comment type="function">
    <text evidence="1">Formation of pseudouridine at positions 38, 39 and 40 in the anticodon stem and loop of transfer RNAs.</text>
</comment>
<comment type="catalytic activity">
    <reaction evidence="1">
        <text>uridine(38/39/40) in tRNA = pseudouridine(38/39/40) in tRNA</text>
        <dbReference type="Rhea" id="RHEA:22376"/>
        <dbReference type="Rhea" id="RHEA-COMP:10085"/>
        <dbReference type="Rhea" id="RHEA-COMP:10087"/>
        <dbReference type="ChEBI" id="CHEBI:65314"/>
        <dbReference type="ChEBI" id="CHEBI:65315"/>
        <dbReference type="EC" id="5.4.99.12"/>
    </reaction>
</comment>
<comment type="subunit">
    <text evidence="1">Homodimer.</text>
</comment>
<comment type="similarity">
    <text evidence="1">Belongs to the tRNA pseudouridine synthase TruA family.</text>
</comment>
<feature type="chain" id="PRO_1000071591" description="tRNA pseudouridine synthase A">
    <location>
        <begin position="1"/>
        <end position="270"/>
    </location>
</feature>
<feature type="active site" description="Nucleophile" evidence="1">
    <location>
        <position position="51"/>
    </location>
</feature>
<feature type="binding site" evidence="1">
    <location>
        <position position="109"/>
    </location>
    <ligand>
        <name>substrate</name>
    </ligand>
</feature>
<sequence length="270" mass="29982">MRIALGIQYDGAAFCGWQSQPHGKTVQDALERALAEFAQTSLHTTVAGRTDTGVHGLGQVVHFDTDLDRADFSWVRGTNAFLPSTVAVQWAKPMPDTFHARFAAFERTYYYALYVHPVRSPMLAARAGWVHTPLDVDAMREAAEHLVGEHDFSAFRSSECQAKSPVKHLYQIGIRPDGDFIHFRFRANAFLHHMVRNLMGCLVAVGRGRYPASWLAEVLESRDRGCAAPTFMPEGLYLAHVGYPAEFAVPPAQLGSVPWSSVWADLDGRP</sequence>
<evidence type="ECO:0000255" key="1">
    <source>
        <dbReference type="HAMAP-Rule" id="MF_00171"/>
    </source>
</evidence>
<dbReference type="EC" id="5.4.99.12" evidence="1"/>
<dbReference type="EMBL" id="CP000085">
    <property type="protein sequence ID" value="ABC36079.1"/>
    <property type="molecule type" value="Genomic_DNA"/>
</dbReference>
<dbReference type="RefSeq" id="WP_009895847.1">
    <property type="nucleotide sequence ID" value="NZ_CP008786.1"/>
</dbReference>
<dbReference type="SMR" id="Q2T7H3"/>
<dbReference type="GeneID" id="45118165"/>
<dbReference type="KEGG" id="bte:BTH_II0677"/>
<dbReference type="HOGENOM" id="CLU_014673_0_2_4"/>
<dbReference type="Proteomes" id="UP000001930">
    <property type="component" value="Chromosome II"/>
</dbReference>
<dbReference type="GO" id="GO:0003723">
    <property type="term" value="F:RNA binding"/>
    <property type="evidence" value="ECO:0007669"/>
    <property type="project" value="InterPro"/>
</dbReference>
<dbReference type="GO" id="GO:0160147">
    <property type="term" value="F:tRNA pseudouridine(38-40) synthase activity"/>
    <property type="evidence" value="ECO:0007669"/>
    <property type="project" value="UniProtKB-EC"/>
</dbReference>
<dbReference type="GO" id="GO:0031119">
    <property type="term" value="P:tRNA pseudouridine synthesis"/>
    <property type="evidence" value="ECO:0007669"/>
    <property type="project" value="UniProtKB-UniRule"/>
</dbReference>
<dbReference type="CDD" id="cd02570">
    <property type="entry name" value="PseudoU_synth_EcTruA"/>
    <property type="match status" value="1"/>
</dbReference>
<dbReference type="FunFam" id="3.30.70.580:FF:000001">
    <property type="entry name" value="tRNA pseudouridine synthase A"/>
    <property type="match status" value="1"/>
</dbReference>
<dbReference type="Gene3D" id="3.30.70.660">
    <property type="entry name" value="Pseudouridine synthase I, catalytic domain, C-terminal subdomain"/>
    <property type="match status" value="1"/>
</dbReference>
<dbReference type="Gene3D" id="3.30.70.580">
    <property type="entry name" value="Pseudouridine synthase I, catalytic domain, N-terminal subdomain"/>
    <property type="match status" value="1"/>
</dbReference>
<dbReference type="HAMAP" id="MF_00171">
    <property type="entry name" value="TruA"/>
    <property type="match status" value="1"/>
</dbReference>
<dbReference type="InterPro" id="IPR020103">
    <property type="entry name" value="PsdUridine_synth_cat_dom_sf"/>
</dbReference>
<dbReference type="InterPro" id="IPR001406">
    <property type="entry name" value="PsdUridine_synth_TruA"/>
</dbReference>
<dbReference type="InterPro" id="IPR020097">
    <property type="entry name" value="PsdUridine_synth_TruA_a/b_dom"/>
</dbReference>
<dbReference type="InterPro" id="IPR020095">
    <property type="entry name" value="PsdUridine_synth_TruA_C"/>
</dbReference>
<dbReference type="InterPro" id="IPR020094">
    <property type="entry name" value="TruA/RsuA/RluB/E/F_N"/>
</dbReference>
<dbReference type="NCBIfam" id="TIGR00071">
    <property type="entry name" value="hisT_truA"/>
    <property type="match status" value="1"/>
</dbReference>
<dbReference type="PANTHER" id="PTHR11142">
    <property type="entry name" value="PSEUDOURIDYLATE SYNTHASE"/>
    <property type="match status" value="1"/>
</dbReference>
<dbReference type="PANTHER" id="PTHR11142:SF0">
    <property type="entry name" value="TRNA PSEUDOURIDINE SYNTHASE-LIKE 1"/>
    <property type="match status" value="1"/>
</dbReference>
<dbReference type="Pfam" id="PF01416">
    <property type="entry name" value="PseudoU_synth_1"/>
    <property type="match status" value="2"/>
</dbReference>
<dbReference type="PIRSF" id="PIRSF001430">
    <property type="entry name" value="tRNA_psdUrid_synth"/>
    <property type="match status" value="1"/>
</dbReference>
<dbReference type="SUPFAM" id="SSF55120">
    <property type="entry name" value="Pseudouridine synthase"/>
    <property type="match status" value="1"/>
</dbReference>
<accession>Q2T7H3</accession>
<gene>
    <name evidence="1" type="primary">truA</name>
    <name type="ordered locus">BTH_II0677</name>
</gene>